<feature type="chain" id="PRO_1000022916" description="2-C-methyl-D-erythritol 4-phosphate cytidylyltransferase">
    <location>
        <begin position="1"/>
        <end position="229"/>
    </location>
</feature>
<feature type="site" description="Transition state stabilizer" evidence="1">
    <location>
        <position position="16"/>
    </location>
</feature>
<feature type="site" description="Transition state stabilizer" evidence="1">
    <location>
        <position position="23"/>
    </location>
</feature>
<feature type="site" description="Positions MEP for the nucleophilic attack" evidence="1">
    <location>
        <position position="155"/>
    </location>
</feature>
<feature type="site" description="Positions MEP for the nucleophilic attack" evidence="1">
    <location>
        <position position="211"/>
    </location>
</feature>
<sequence length="229" mass="25754">MSKNSVIIVAAGKGKRMNSSISKQFLQIKNKPILYYTLSKFSAHESIDEIVLVTLEDKIEVCSDIIDKYNINKVSKIVPGGKERQDSVYNGLKAVSKDCEVVLIHDAARPFVTSDIIENGIRCANQYGAAACGVIPKDTIKIKNEKEFAIDTPNREDLFIVQTPQCFNYNIILDCHEKLKKHNKKVTDDTMVLENYGKSVYLYEGSYSNIKITTPEDLILGEQILEKLT</sequence>
<keyword id="KW-0414">Isoprene biosynthesis</keyword>
<keyword id="KW-0548">Nucleotidyltransferase</keyword>
<keyword id="KW-0808">Transferase</keyword>
<comment type="function">
    <text evidence="1">Catalyzes the formation of 4-diphosphocytidyl-2-C-methyl-D-erythritol from CTP and 2-C-methyl-D-erythritol 4-phosphate (MEP).</text>
</comment>
<comment type="catalytic activity">
    <reaction evidence="1">
        <text>2-C-methyl-D-erythritol 4-phosphate + CTP + H(+) = 4-CDP-2-C-methyl-D-erythritol + diphosphate</text>
        <dbReference type="Rhea" id="RHEA:13429"/>
        <dbReference type="ChEBI" id="CHEBI:15378"/>
        <dbReference type="ChEBI" id="CHEBI:33019"/>
        <dbReference type="ChEBI" id="CHEBI:37563"/>
        <dbReference type="ChEBI" id="CHEBI:57823"/>
        <dbReference type="ChEBI" id="CHEBI:58262"/>
        <dbReference type="EC" id="2.7.7.60"/>
    </reaction>
</comment>
<comment type="pathway">
    <text evidence="1">Isoprenoid biosynthesis; isopentenyl diphosphate biosynthesis via DXP pathway; isopentenyl diphosphate from 1-deoxy-D-xylulose 5-phosphate: step 2/6.</text>
</comment>
<comment type="similarity">
    <text evidence="1">Belongs to the IspD/TarI cytidylyltransferase family. IspD subfamily.</text>
</comment>
<gene>
    <name evidence="1" type="primary">ispD</name>
    <name type="ordered locus">CLI_3691</name>
</gene>
<proteinExistence type="inferred from homology"/>
<organism>
    <name type="scientific">Clostridium botulinum (strain Langeland / NCTC 10281 / Type F)</name>
    <dbReference type="NCBI Taxonomy" id="441772"/>
    <lineage>
        <taxon>Bacteria</taxon>
        <taxon>Bacillati</taxon>
        <taxon>Bacillota</taxon>
        <taxon>Clostridia</taxon>
        <taxon>Eubacteriales</taxon>
        <taxon>Clostridiaceae</taxon>
        <taxon>Clostridium</taxon>
    </lineage>
</organism>
<name>ISPD_CLOBL</name>
<protein>
    <recommendedName>
        <fullName evidence="1">2-C-methyl-D-erythritol 4-phosphate cytidylyltransferase</fullName>
        <ecNumber evidence="1">2.7.7.60</ecNumber>
    </recommendedName>
    <alternativeName>
        <fullName evidence="1">4-diphosphocytidyl-2C-methyl-D-erythritol synthase</fullName>
    </alternativeName>
    <alternativeName>
        <fullName evidence="1">MEP cytidylyltransferase</fullName>
        <shortName evidence="1">MCT</shortName>
    </alternativeName>
</protein>
<evidence type="ECO:0000255" key="1">
    <source>
        <dbReference type="HAMAP-Rule" id="MF_00108"/>
    </source>
</evidence>
<reference key="1">
    <citation type="submission" date="2007-06" db="EMBL/GenBank/DDBJ databases">
        <authorList>
            <person name="Brinkac L.M."/>
            <person name="Daugherty S."/>
            <person name="Dodson R.J."/>
            <person name="Madupu R."/>
            <person name="Brown J.L."/>
            <person name="Bruce D."/>
            <person name="Detter C."/>
            <person name="Munk C."/>
            <person name="Smith L.A."/>
            <person name="Smith T.J."/>
            <person name="White O."/>
            <person name="Brettin T.S."/>
        </authorList>
    </citation>
    <scope>NUCLEOTIDE SEQUENCE [LARGE SCALE GENOMIC DNA]</scope>
    <source>
        <strain>Langeland / NCTC 10281 / Type F</strain>
    </source>
</reference>
<dbReference type="EC" id="2.7.7.60" evidence="1"/>
<dbReference type="EMBL" id="CP000728">
    <property type="protein sequence ID" value="ABS42176.1"/>
    <property type="molecule type" value="Genomic_DNA"/>
</dbReference>
<dbReference type="RefSeq" id="WP_012101144.1">
    <property type="nucleotide sequence ID" value="NC_009699.1"/>
</dbReference>
<dbReference type="SMR" id="A7GJ99"/>
<dbReference type="KEGG" id="cbf:CLI_3691"/>
<dbReference type="HOGENOM" id="CLU_061281_2_2_9"/>
<dbReference type="UniPathway" id="UPA00056">
    <property type="reaction ID" value="UER00093"/>
</dbReference>
<dbReference type="Proteomes" id="UP000002410">
    <property type="component" value="Chromosome"/>
</dbReference>
<dbReference type="GO" id="GO:0050518">
    <property type="term" value="F:2-C-methyl-D-erythritol 4-phosphate cytidylyltransferase activity"/>
    <property type="evidence" value="ECO:0007669"/>
    <property type="project" value="UniProtKB-UniRule"/>
</dbReference>
<dbReference type="GO" id="GO:0019288">
    <property type="term" value="P:isopentenyl diphosphate biosynthetic process, methylerythritol 4-phosphate pathway"/>
    <property type="evidence" value="ECO:0007669"/>
    <property type="project" value="UniProtKB-UniRule"/>
</dbReference>
<dbReference type="CDD" id="cd02516">
    <property type="entry name" value="CDP-ME_synthetase"/>
    <property type="match status" value="1"/>
</dbReference>
<dbReference type="FunFam" id="3.90.550.10:FF:000003">
    <property type="entry name" value="2-C-methyl-D-erythritol 4-phosphate cytidylyltransferase"/>
    <property type="match status" value="1"/>
</dbReference>
<dbReference type="Gene3D" id="3.90.550.10">
    <property type="entry name" value="Spore Coat Polysaccharide Biosynthesis Protein SpsA, Chain A"/>
    <property type="match status" value="1"/>
</dbReference>
<dbReference type="HAMAP" id="MF_00108">
    <property type="entry name" value="IspD"/>
    <property type="match status" value="1"/>
</dbReference>
<dbReference type="InterPro" id="IPR001228">
    <property type="entry name" value="IspD"/>
</dbReference>
<dbReference type="InterPro" id="IPR034683">
    <property type="entry name" value="IspD/TarI"/>
</dbReference>
<dbReference type="InterPro" id="IPR050088">
    <property type="entry name" value="IspD/TarI_cytidylyltransf_bact"/>
</dbReference>
<dbReference type="InterPro" id="IPR018294">
    <property type="entry name" value="ISPD_synthase_CS"/>
</dbReference>
<dbReference type="InterPro" id="IPR029044">
    <property type="entry name" value="Nucleotide-diphossugar_trans"/>
</dbReference>
<dbReference type="NCBIfam" id="TIGR00453">
    <property type="entry name" value="ispD"/>
    <property type="match status" value="1"/>
</dbReference>
<dbReference type="NCBIfam" id="NF001183">
    <property type="entry name" value="PRK00155.1-3"/>
    <property type="match status" value="1"/>
</dbReference>
<dbReference type="PANTHER" id="PTHR32125">
    <property type="entry name" value="2-C-METHYL-D-ERYTHRITOL 4-PHOSPHATE CYTIDYLYLTRANSFERASE, CHLOROPLASTIC"/>
    <property type="match status" value="1"/>
</dbReference>
<dbReference type="PANTHER" id="PTHR32125:SF4">
    <property type="entry name" value="2-C-METHYL-D-ERYTHRITOL 4-PHOSPHATE CYTIDYLYLTRANSFERASE, CHLOROPLASTIC"/>
    <property type="match status" value="1"/>
</dbReference>
<dbReference type="Pfam" id="PF01128">
    <property type="entry name" value="IspD"/>
    <property type="match status" value="1"/>
</dbReference>
<dbReference type="SUPFAM" id="SSF53448">
    <property type="entry name" value="Nucleotide-diphospho-sugar transferases"/>
    <property type="match status" value="1"/>
</dbReference>
<dbReference type="PROSITE" id="PS01295">
    <property type="entry name" value="ISPD"/>
    <property type="match status" value="1"/>
</dbReference>
<accession>A7GJ99</accession>